<evidence type="ECO:0000255" key="1">
    <source>
        <dbReference type="HAMAP-Rule" id="MF_00755"/>
    </source>
</evidence>
<protein>
    <recommendedName>
        <fullName evidence="1">Ribonuclease P protein component 2</fullName>
        <shortName evidence="1">RNase P component 2</shortName>
        <ecNumber evidence="1">3.1.26.5</ecNumber>
    </recommendedName>
    <alternativeName>
        <fullName evidence="1">Pop5</fullName>
    </alternativeName>
</protein>
<reference key="1">
    <citation type="journal article" date="2009" name="Proc. Natl. Acad. Sci. U.S.A.">
        <title>Biogeography of the Sulfolobus islandicus pan-genome.</title>
        <authorList>
            <person name="Reno M.L."/>
            <person name="Held N.L."/>
            <person name="Fields C.J."/>
            <person name="Burke P.V."/>
            <person name="Whitaker R.J."/>
        </authorList>
    </citation>
    <scope>NUCLEOTIDE SEQUENCE [LARGE SCALE GENOMIC DNA]</scope>
    <source>
        <strain>Y.G.57.14 / Yellowstone #1</strain>
    </source>
</reference>
<comment type="function">
    <text evidence="1">Part of ribonuclease P, a protein complex that generates mature tRNA molecules by cleaving their 5'-ends.</text>
</comment>
<comment type="catalytic activity">
    <reaction evidence="1">
        <text>Endonucleolytic cleavage of RNA, removing 5'-extranucleotides from tRNA precursor.</text>
        <dbReference type="EC" id="3.1.26.5"/>
    </reaction>
</comment>
<comment type="subunit">
    <text evidence="1">Consists of a catalytic RNA component and at least 4-5 protein subunits.</text>
</comment>
<comment type="subcellular location">
    <subcellularLocation>
        <location evidence="1">Cytoplasm</location>
    </subcellularLocation>
</comment>
<comment type="similarity">
    <text evidence="1">Belongs to the eukaryotic/archaeal RNase P protein component 2 family.</text>
</comment>
<dbReference type="EC" id="3.1.26.5" evidence="1"/>
<dbReference type="EMBL" id="CP001403">
    <property type="protein sequence ID" value="ACP45664.1"/>
    <property type="molecule type" value="Genomic_DNA"/>
</dbReference>
<dbReference type="RefSeq" id="WP_012711400.1">
    <property type="nucleotide sequence ID" value="NC_012622.1"/>
</dbReference>
<dbReference type="SMR" id="C3NEC5"/>
<dbReference type="KEGG" id="siy:YG5714_1397"/>
<dbReference type="HOGENOM" id="CLU_1801579_0_0_2"/>
<dbReference type="Proteomes" id="UP000002308">
    <property type="component" value="Chromosome"/>
</dbReference>
<dbReference type="GO" id="GO:0005737">
    <property type="term" value="C:cytoplasm"/>
    <property type="evidence" value="ECO:0007669"/>
    <property type="project" value="UniProtKB-SubCell"/>
</dbReference>
<dbReference type="GO" id="GO:0030677">
    <property type="term" value="C:ribonuclease P complex"/>
    <property type="evidence" value="ECO:0007669"/>
    <property type="project" value="UniProtKB-UniRule"/>
</dbReference>
<dbReference type="GO" id="GO:0004526">
    <property type="term" value="F:ribonuclease P activity"/>
    <property type="evidence" value="ECO:0007669"/>
    <property type="project" value="UniProtKB-UniRule"/>
</dbReference>
<dbReference type="GO" id="GO:0001682">
    <property type="term" value="P:tRNA 5'-leader removal"/>
    <property type="evidence" value="ECO:0007669"/>
    <property type="project" value="UniProtKB-UniRule"/>
</dbReference>
<dbReference type="Gene3D" id="3.30.70.3250">
    <property type="entry name" value="Ribonuclease P, Pop5 subunit"/>
    <property type="match status" value="1"/>
</dbReference>
<dbReference type="HAMAP" id="MF_00755">
    <property type="entry name" value="RNase_P_2"/>
    <property type="match status" value="1"/>
</dbReference>
<dbReference type="InterPro" id="IPR002759">
    <property type="entry name" value="Pop5/Rpp14/Rnp2-like"/>
</dbReference>
<dbReference type="InterPro" id="IPR038085">
    <property type="entry name" value="Rnp2-like_sf"/>
</dbReference>
<dbReference type="Pfam" id="PF01900">
    <property type="entry name" value="RNase_P_Rpp14"/>
    <property type="match status" value="1"/>
</dbReference>
<dbReference type="SUPFAM" id="SSF160350">
    <property type="entry name" value="Rnp2-like"/>
    <property type="match status" value="1"/>
</dbReference>
<keyword id="KW-0963">Cytoplasm</keyword>
<keyword id="KW-0255">Endonuclease</keyword>
<keyword id="KW-0378">Hydrolase</keyword>
<keyword id="KW-0540">Nuclease</keyword>
<keyword id="KW-0819">tRNA processing</keyword>
<proteinExistence type="inferred from homology"/>
<feature type="chain" id="PRO_1000212858" description="Ribonuclease P protein component 2">
    <location>
        <begin position="1"/>
        <end position="143"/>
    </location>
</feature>
<organism>
    <name type="scientific">Saccharolobus islandicus (strain Y.G.57.14 / Yellowstone #1)</name>
    <name type="common">Sulfolobus islandicus</name>
    <dbReference type="NCBI Taxonomy" id="439386"/>
    <lineage>
        <taxon>Archaea</taxon>
        <taxon>Thermoproteota</taxon>
        <taxon>Thermoprotei</taxon>
        <taxon>Sulfolobales</taxon>
        <taxon>Sulfolobaceae</taxon>
        <taxon>Saccharolobus</taxon>
    </lineage>
</organism>
<name>RNP2_SACI7</name>
<gene>
    <name evidence="1" type="primary">rnp2</name>
    <name type="ordered locus">YG5714_1397</name>
</gene>
<accession>C3NEC5</accession>
<sequence>MNSIQLIIDIILILWLLILTVLYLRKKSLNLNIVKNKKIVRAKRYIVFYVIAESKVKGDDLERVVRNSLKDLLGNVWLNIANPKVVTYREDTQEGIISTNRIGYKAVLASLPFAKEINGNKILIVPRRTTGSLKKAKKLIGLK</sequence>